<keyword id="KW-0030">Aminoacyl-tRNA synthetase</keyword>
<keyword id="KW-0067">ATP-binding</keyword>
<keyword id="KW-0963">Cytoplasm</keyword>
<keyword id="KW-0436">Ligase</keyword>
<keyword id="KW-0547">Nucleotide-binding</keyword>
<keyword id="KW-0648">Protein biosynthesis</keyword>
<keyword id="KW-1185">Reference proteome</keyword>
<dbReference type="EC" id="6.1.1.4" evidence="1"/>
<dbReference type="EMBL" id="AE000512">
    <property type="protein sequence ID" value="AAD35261.1"/>
    <property type="molecule type" value="Genomic_DNA"/>
</dbReference>
<dbReference type="PIR" id="F72408">
    <property type="entry name" value="F72408"/>
</dbReference>
<dbReference type="RefSeq" id="NP_227983.1">
    <property type="nucleotide sequence ID" value="NC_000853.1"/>
</dbReference>
<dbReference type="RefSeq" id="WP_004082796.1">
    <property type="nucleotide sequence ID" value="NC_000853.1"/>
</dbReference>
<dbReference type="SMR" id="Q9WY15"/>
<dbReference type="FunCoup" id="Q9WY15">
    <property type="interactions" value="432"/>
</dbReference>
<dbReference type="STRING" id="243274.TM_0168"/>
<dbReference type="PaxDb" id="243274-THEMA_03960"/>
<dbReference type="EnsemblBacteria" id="AAD35261">
    <property type="protein sequence ID" value="AAD35261"/>
    <property type="gene ID" value="TM_0168"/>
</dbReference>
<dbReference type="KEGG" id="tma:TM0168"/>
<dbReference type="KEGG" id="tmi:THEMA_03960"/>
<dbReference type="KEGG" id="tmm:Tmari_0166"/>
<dbReference type="KEGG" id="tmw:THMA_0164"/>
<dbReference type="eggNOG" id="COG0495">
    <property type="taxonomic scope" value="Bacteria"/>
</dbReference>
<dbReference type="InParanoid" id="Q9WY15"/>
<dbReference type="OrthoDB" id="9810365at2"/>
<dbReference type="Proteomes" id="UP000008183">
    <property type="component" value="Chromosome"/>
</dbReference>
<dbReference type="GO" id="GO:0005829">
    <property type="term" value="C:cytosol"/>
    <property type="evidence" value="ECO:0000318"/>
    <property type="project" value="GO_Central"/>
</dbReference>
<dbReference type="GO" id="GO:0002161">
    <property type="term" value="F:aminoacyl-tRNA deacylase activity"/>
    <property type="evidence" value="ECO:0007669"/>
    <property type="project" value="InterPro"/>
</dbReference>
<dbReference type="GO" id="GO:0005524">
    <property type="term" value="F:ATP binding"/>
    <property type="evidence" value="ECO:0007669"/>
    <property type="project" value="UniProtKB-UniRule"/>
</dbReference>
<dbReference type="GO" id="GO:0004823">
    <property type="term" value="F:leucine-tRNA ligase activity"/>
    <property type="evidence" value="ECO:0000318"/>
    <property type="project" value="GO_Central"/>
</dbReference>
<dbReference type="GO" id="GO:0006429">
    <property type="term" value="P:leucyl-tRNA aminoacylation"/>
    <property type="evidence" value="ECO:0000318"/>
    <property type="project" value="GO_Central"/>
</dbReference>
<dbReference type="CDD" id="cd07958">
    <property type="entry name" value="Anticodon_Ia_Leu_BEm"/>
    <property type="match status" value="1"/>
</dbReference>
<dbReference type="CDD" id="cd00812">
    <property type="entry name" value="LeuRS_core"/>
    <property type="match status" value="1"/>
</dbReference>
<dbReference type="FunFam" id="3.10.20.590:FF:000001">
    <property type="entry name" value="Leucine--tRNA ligase"/>
    <property type="match status" value="1"/>
</dbReference>
<dbReference type="FunFam" id="3.40.50.620:FF:000003">
    <property type="entry name" value="Leucine--tRNA ligase"/>
    <property type="match status" value="1"/>
</dbReference>
<dbReference type="FunFam" id="3.40.50.620:FF:000212">
    <property type="entry name" value="Leucine--tRNA ligase"/>
    <property type="match status" value="1"/>
</dbReference>
<dbReference type="FunFam" id="1.10.730.10:FF:000011">
    <property type="entry name" value="Leucine--tRNA ligase chloroplastic/mitochondrial"/>
    <property type="match status" value="1"/>
</dbReference>
<dbReference type="Gene3D" id="3.10.20.590">
    <property type="match status" value="1"/>
</dbReference>
<dbReference type="Gene3D" id="3.40.50.620">
    <property type="entry name" value="HUPs"/>
    <property type="match status" value="2"/>
</dbReference>
<dbReference type="Gene3D" id="1.10.730.10">
    <property type="entry name" value="Isoleucyl-tRNA Synthetase, Domain 1"/>
    <property type="match status" value="1"/>
</dbReference>
<dbReference type="HAMAP" id="MF_00049_B">
    <property type="entry name" value="Leu_tRNA_synth_B"/>
    <property type="match status" value="1"/>
</dbReference>
<dbReference type="InterPro" id="IPR001412">
    <property type="entry name" value="aa-tRNA-synth_I_CS"/>
</dbReference>
<dbReference type="InterPro" id="IPR002300">
    <property type="entry name" value="aa-tRNA-synth_Ia"/>
</dbReference>
<dbReference type="InterPro" id="IPR002302">
    <property type="entry name" value="Leu-tRNA-ligase"/>
</dbReference>
<dbReference type="InterPro" id="IPR025709">
    <property type="entry name" value="Leu_tRNA-synth_edit"/>
</dbReference>
<dbReference type="InterPro" id="IPR013155">
    <property type="entry name" value="M/V/L/I-tRNA-synth_anticd-bd"/>
</dbReference>
<dbReference type="InterPro" id="IPR015413">
    <property type="entry name" value="Methionyl/Leucyl_tRNA_Synth"/>
</dbReference>
<dbReference type="InterPro" id="IPR014729">
    <property type="entry name" value="Rossmann-like_a/b/a_fold"/>
</dbReference>
<dbReference type="InterPro" id="IPR009080">
    <property type="entry name" value="tRNAsynth_Ia_anticodon-bd"/>
</dbReference>
<dbReference type="InterPro" id="IPR009008">
    <property type="entry name" value="Val/Leu/Ile-tRNA-synth_edit"/>
</dbReference>
<dbReference type="NCBIfam" id="TIGR00396">
    <property type="entry name" value="leuS_bact"/>
    <property type="match status" value="1"/>
</dbReference>
<dbReference type="PANTHER" id="PTHR43740:SF2">
    <property type="entry name" value="LEUCINE--TRNA LIGASE, MITOCHONDRIAL"/>
    <property type="match status" value="1"/>
</dbReference>
<dbReference type="PANTHER" id="PTHR43740">
    <property type="entry name" value="LEUCYL-TRNA SYNTHETASE"/>
    <property type="match status" value="1"/>
</dbReference>
<dbReference type="Pfam" id="PF08264">
    <property type="entry name" value="Anticodon_1"/>
    <property type="match status" value="1"/>
</dbReference>
<dbReference type="Pfam" id="PF00133">
    <property type="entry name" value="tRNA-synt_1"/>
    <property type="match status" value="1"/>
</dbReference>
<dbReference type="Pfam" id="PF13603">
    <property type="entry name" value="tRNA-synt_1_2"/>
    <property type="match status" value="1"/>
</dbReference>
<dbReference type="Pfam" id="PF09334">
    <property type="entry name" value="tRNA-synt_1g"/>
    <property type="match status" value="1"/>
</dbReference>
<dbReference type="PRINTS" id="PR00985">
    <property type="entry name" value="TRNASYNTHLEU"/>
</dbReference>
<dbReference type="SUPFAM" id="SSF47323">
    <property type="entry name" value="Anticodon-binding domain of a subclass of class I aminoacyl-tRNA synthetases"/>
    <property type="match status" value="1"/>
</dbReference>
<dbReference type="SUPFAM" id="SSF52374">
    <property type="entry name" value="Nucleotidylyl transferase"/>
    <property type="match status" value="1"/>
</dbReference>
<dbReference type="SUPFAM" id="SSF50677">
    <property type="entry name" value="ValRS/IleRS/LeuRS editing domain"/>
    <property type="match status" value="1"/>
</dbReference>
<dbReference type="PROSITE" id="PS00178">
    <property type="entry name" value="AA_TRNA_LIGASE_I"/>
    <property type="match status" value="1"/>
</dbReference>
<gene>
    <name evidence="1" type="primary">leuS</name>
    <name type="ordered locus">TM_0168</name>
</gene>
<reference key="1">
    <citation type="journal article" date="1999" name="Nature">
        <title>Evidence for lateral gene transfer between Archaea and Bacteria from genome sequence of Thermotoga maritima.</title>
        <authorList>
            <person name="Nelson K.E."/>
            <person name="Clayton R.A."/>
            <person name="Gill S.R."/>
            <person name="Gwinn M.L."/>
            <person name="Dodson R.J."/>
            <person name="Haft D.H."/>
            <person name="Hickey E.K."/>
            <person name="Peterson J.D."/>
            <person name="Nelson W.C."/>
            <person name="Ketchum K.A."/>
            <person name="McDonald L.A."/>
            <person name="Utterback T.R."/>
            <person name="Malek J.A."/>
            <person name="Linher K.D."/>
            <person name="Garrett M.M."/>
            <person name="Stewart A.M."/>
            <person name="Cotton M.D."/>
            <person name="Pratt M.S."/>
            <person name="Phillips C.A."/>
            <person name="Richardson D.L."/>
            <person name="Heidelberg J.F."/>
            <person name="Sutton G.G."/>
            <person name="Fleischmann R.D."/>
            <person name="Eisen J.A."/>
            <person name="White O."/>
            <person name="Salzberg S.L."/>
            <person name="Smith H.O."/>
            <person name="Venter J.C."/>
            <person name="Fraser C.M."/>
        </authorList>
    </citation>
    <scope>NUCLEOTIDE SEQUENCE [LARGE SCALE GENOMIC DNA]</scope>
    <source>
        <strain>ATCC 43589 / DSM 3109 / JCM 10099 / NBRC 100826 / MSB8</strain>
    </source>
</reference>
<accession>Q9WY15</accession>
<protein>
    <recommendedName>
        <fullName evidence="1">Leucine--tRNA ligase</fullName>
        <ecNumber evidence="1">6.1.1.4</ecNumber>
    </recommendedName>
    <alternativeName>
        <fullName evidence="1">Leucyl-tRNA synthetase</fullName>
        <shortName evidence="1">LeuRS</shortName>
    </alternativeName>
</protein>
<organism>
    <name type="scientific">Thermotoga maritima (strain ATCC 43589 / DSM 3109 / JCM 10099 / NBRC 100826 / MSB8)</name>
    <dbReference type="NCBI Taxonomy" id="243274"/>
    <lineage>
        <taxon>Bacteria</taxon>
        <taxon>Thermotogati</taxon>
        <taxon>Thermotogota</taxon>
        <taxon>Thermotogae</taxon>
        <taxon>Thermotogales</taxon>
        <taxon>Thermotogaceae</taxon>
        <taxon>Thermotoga</taxon>
    </lineage>
</organism>
<sequence length="824" mass="95625">MKEYRPQEIEKKWQEVWEEKKVFYTPQRSEKPKYYALVMFPYPSGTLHVGHVKNYVIGDIVARYKRMRGYNVLHPFGYDAFGLPAENAAIEKGIHPEEWTRKNIATIRQQVKKLGISYDWSREIATCDEEYYKWTQWIFLQLYKNGLAYKKKAAVNWCPKCKTVLANEQVKDGKCERCGTSVTIRHLEQWFFKITDYAERLLNDLDKLTGWPEHVKTMQRNWIGKSTGAEIDFPVEGSDTKIRVFTTRPDTLWGVTFMALAPESPLVEELVPEEKKEELQEFLERVKQQDRFRRTSVEAEKEGFFLGRYAINPVTGERIPIYVANYILMEYGTGAIMGVPAHDQRDFSFAKKYGIPIKVVIKPADKDLDPEKMEEAYEGEGIMVNSGPFDGTPSSEGIEKVINWLEEKGIGKRSVQYKLRDWLISRQRYWGAPIPIIYCEKCGVVPVPEEDLPVRLPKDVEFLPTGQSPLSFHEGFKKTKCPVCGGEAQRETDTMDTFVDSSWYFLRYVNPHLEDKPFEPDDVNYWLPVDQYIGGVEHAVLHLLYSRFVTKVLHDLGYLNFDEPFTNLFTQGMIYKDGAKMSKSKGNVVSPDEMIEKYGADTLRMYILFMAPPEKDAEWSDAGIEGVHRFVKRLWNTFYTVLPFVKEENTENLVLKNSTEKELRRKLHSIIKKITEDIEGGFKFNTAISGLMELVNHLSQYLNSVPQEEWNRKLLREIVEKLTLALSPFAPHLAEEFWHDLGNDSLVVQQSWPSYDPKALEVEEVEIAIQINGKVRDKVVVPVDISEEDLKRIVLERERVKEYVDGKPIRKFIYVKGRIVNIVV</sequence>
<proteinExistence type="inferred from homology"/>
<comment type="catalytic activity">
    <reaction evidence="1">
        <text>tRNA(Leu) + L-leucine + ATP = L-leucyl-tRNA(Leu) + AMP + diphosphate</text>
        <dbReference type="Rhea" id="RHEA:11688"/>
        <dbReference type="Rhea" id="RHEA-COMP:9613"/>
        <dbReference type="Rhea" id="RHEA-COMP:9622"/>
        <dbReference type="ChEBI" id="CHEBI:30616"/>
        <dbReference type="ChEBI" id="CHEBI:33019"/>
        <dbReference type="ChEBI" id="CHEBI:57427"/>
        <dbReference type="ChEBI" id="CHEBI:78442"/>
        <dbReference type="ChEBI" id="CHEBI:78494"/>
        <dbReference type="ChEBI" id="CHEBI:456215"/>
        <dbReference type="EC" id="6.1.1.4"/>
    </reaction>
</comment>
<comment type="subcellular location">
    <subcellularLocation>
        <location evidence="1">Cytoplasm</location>
    </subcellularLocation>
</comment>
<comment type="similarity">
    <text evidence="1">Belongs to the class-I aminoacyl-tRNA synthetase family.</text>
</comment>
<evidence type="ECO:0000255" key="1">
    <source>
        <dbReference type="HAMAP-Rule" id="MF_00049"/>
    </source>
</evidence>
<name>SYL_THEMA</name>
<feature type="chain" id="PRO_0000152106" description="Leucine--tRNA ligase">
    <location>
        <begin position="1"/>
        <end position="824"/>
    </location>
</feature>
<feature type="short sequence motif" description="'HIGH' region">
    <location>
        <begin position="41"/>
        <end position="51"/>
    </location>
</feature>
<feature type="short sequence motif" description="'KMSKS' region">
    <location>
        <begin position="580"/>
        <end position="584"/>
    </location>
</feature>
<feature type="binding site" evidence="1">
    <location>
        <position position="583"/>
    </location>
    <ligand>
        <name>ATP</name>
        <dbReference type="ChEBI" id="CHEBI:30616"/>
    </ligand>
</feature>